<feature type="chain" id="PRO_0000400303" description="Mycothiol acetyltransferase">
    <location>
        <begin position="1"/>
        <end position="309"/>
    </location>
</feature>
<feature type="domain" description="N-acetyltransferase 1" evidence="1">
    <location>
        <begin position="16"/>
        <end position="158"/>
    </location>
</feature>
<feature type="domain" description="N-acetyltransferase 2" evidence="1">
    <location>
        <begin position="166"/>
        <end position="309"/>
    </location>
</feature>
<feature type="binding site" evidence="1">
    <location>
        <position position="47"/>
    </location>
    <ligand>
        <name>1D-myo-inositol 2-(L-cysteinylamino)-2-deoxy-alpha-D-glucopyranoside</name>
        <dbReference type="ChEBI" id="CHEBI:58887"/>
    </ligand>
</feature>
<feature type="binding site" evidence="1">
    <location>
        <begin position="92"/>
        <end position="94"/>
    </location>
    <ligand>
        <name>acetyl-CoA</name>
        <dbReference type="ChEBI" id="CHEBI:57288"/>
        <label>1</label>
    </ligand>
</feature>
<feature type="binding site" evidence="1">
    <location>
        <position position="193"/>
    </location>
    <ligand>
        <name>1D-myo-inositol 2-(L-cysteinylamino)-2-deoxy-alpha-D-glucopyranoside</name>
        <dbReference type="ChEBI" id="CHEBI:58887"/>
    </ligand>
</feature>
<feature type="binding site" evidence="1">
    <location>
        <position position="232"/>
    </location>
    <ligand>
        <name>1D-myo-inositol 2-(L-cysteinylamino)-2-deoxy-alpha-D-glucopyranoside</name>
        <dbReference type="ChEBI" id="CHEBI:58887"/>
    </ligand>
</feature>
<feature type="binding site" evidence="1">
    <location>
        <position position="241"/>
    </location>
    <ligand>
        <name>1D-myo-inositol 2-(L-cysteinylamino)-2-deoxy-alpha-D-glucopyranoside</name>
        <dbReference type="ChEBI" id="CHEBI:58887"/>
    </ligand>
</feature>
<feature type="binding site" evidence="1">
    <location>
        <begin position="245"/>
        <end position="247"/>
    </location>
    <ligand>
        <name>acetyl-CoA</name>
        <dbReference type="ChEBI" id="CHEBI:57288"/>
        <label>2</label>
    </ligand>
</feature>
<feature type="binding site" evidence="1">
    <location>
        <begin position="252"/>
        <end position="258"/>
    </location>
    <ligand>
        <name>acetyl-CoA</name>
        <dbReference type="ChEBI" id="CHEBI:57288"/>
        <label>2</label>
    </ligand>
</feature>
<feature type="binding site" evidence="1">
    <location>
        <position position="279"/>
    </location>
    <ligand>
        <name>1D-myo-inositol 2-(L-cysteinylamino)-2-deoxy-alpha-D-glucopyranoside</name>
        <dbReference type="ChEBI" id="CHEBI:58887"/>
    </ligand>
</feature>
<name>MSHD_STRCO</name>
<reference key="1">
    <citation type="journal article" date="2002" name="Nature">
        <title>Complete genome sequence of the model actinomycete Streptomyces coelicolor A3(2).</title>
        <authorList>
            <person name="Bentley S.D."/>
            <person name="Chater K.F."/>
            <person name="Cerdeno-Tarraga A.-M."/>
            <person name="Challis G.L."/>
            <person name="Thomson N.R."/>
            <person name="James K.D."/>
            <person name="Harris D.E."/>
            <person name="Quail M.A."/>
            <person name="Kieser H."/>
            <person name="Harper D."/>
            <person name="Bateman A."/>
            <person name="Brown S."/>
            <person name="Chandra G."/>
            <person name="Chen C.W."/>
            <person name="Collins M."/>
            <person name="Cronin A."/>
            <person name="Fraser A."/>
            <person name="Goble A."/>
            <person name="Hidalgo J."/>
            <person name="Hornsby T."/>
            <person name="Howarth S."/>
            <person name="Huang C.-H."/>
            <person name="Kieser T."/>
            <person name="Larke L."/>
            <person name="Murphy L.D."/>
            <person name="Oliver K."/>
            <person name="O'Neil S."/>
            <person name="Rabbinowitsch E."/>
            <person name="Rajandream M.A."/>
            <person name="Rutherford K.M."/>
            <person name="Rutter S."/>
            <person name="Seeger K."/>
            <person name="Saunders D."/>
            <person name="Sharp S."/>
            <person name="Squares R."/>
            <person name="Squares S."/>
            <person name="Taylor K."/>
            <person name="Warren T."/>
            <person name="Wietzorrek A."/>
            <person name="Woodward J.R."/>
            <person name="Barrell B.G."/>
            <person name="Parkhill J."/>
            <person name="Hopwood D.A."/>
        </authorList>
    </citation>
    <scope>NUCLEOTIDE SEQUENCE [LARGE SCALE GENOMIC DNA]</scope>
    <source>
        <strain>ATCC BAA-471 / A3(2) / M145</strain>
    </source>
</reference>
<reference key="2">
    <citation type="journal article" date="2008" name="Mol. Microbiol.">
        <title>Mycothiol regulates and is regulated by a thiol-specific antisigma factor RsrA and sigma(R) in Streptomyces coelicolor.</title>
        <authorList>
            <person name="Park J.H."/>
            <person name="Roe J.H."/>
        </authorList>
    </citation>
    <scope>INDUCTION</scope>
    <source>
        <strain>ATCC BAA-471 / A3(2) / M145</strain>
    </source>
</reference>
<accession>Q9KZV0</accession>
<proteinExistence type="evidence at transcript level"/>
<organism>
    <name type="scientific">Streptomyces coelicolor (strain ATCC BAA-471 / A3(2) / M145)</name>
    <dbReference type="NCBI Taxonomy" id="100226"/>
    <lineage>
        <taxon>Bacteria</taxon>
        <taxon>Bacillati</taxon>
        <taxon>Actinomycetota</taxon>
        <taxon>Actinomycetes</taxon>
        <taxon>Kitasatosporales</taxon>
        <taxon>Streptomycetaceae</taxon>
        <taxon>Streptomyces</taxon>
        <taxon>Streptomyces albidoflavus group</taxon>
    </lineage>
</organism>
<dbReference type="EC" id="2.3.1.189" evidence="1"/>
<dbReference type="EMBL" id="AL939119">
    <property type="protein sequence ID" value="CAB88484.1"/>
    <property type="molecule type" value="Genomic_DNA"/>
</dbReference>
<dbReference type="RefSeq" id="NP_628328.1">
    <property type="nucleotide sequence ID" value="NC_003888.3"/>
</dbReference>
<dbReference type="RefSeq" id="WP_003974818.1">
    <property type="nucleotide sequence ID" value="NZ_VNID01000038.1"/>
</dbReference>
<dbReference type="SMR" id="Q9KZV0"/>
<dbReference type="STRING" id="100226.gene:17761795"/>
<dbReference type="PaxDb" id="100226-SCO4151"/>
<dbReference type="GeneID" id="91384883"/>
<dbReference type="KEGG" id="sco:SCO4151"/>
<dbReference type="PATRIC" id="fig|100226.15.peg.4215"/>
<dbReference type="eggNOG" id="COG0456">
    <property type="taxonomic scope" value="Bacteria"/>
</dbReference>
<dbReference type="HOGENOM" id="CLU_068014_0_0_11"/>
<dbReference type="InParanoid" id="Q9KZV0"/>
<dbReference type="OrthoDB" id="3208058at2"/>
<dbReference type="PhylomeDB" id="Q9KZV0"/>
<dbReference type="Proteomes" id="UP000001973">
    <property type="component" value="Chromosome"/>
</dbReference>
<dbReference type="GO" id="GO:0035447">
    <property type="term" value="F:mycothiol synthase activity"/>
    <property type="evidence" value="ECO:0000318"/>
    <property type="project" value="GO_Central"/>
</dbReference>
<dbReference type="GO" id="GO:0008999">
    <property type="term" value="F:protein-N-terminal-alanine acetyltransferase activity"/>
    <property type="evidence" value="ECO:0000318"/>
    <property type="project" value="GO_Central"/>
</dbReference>
<dbReference type="GO" id="GO:0010125">
    <property type="term" value="P:mycothiol biosynthetic process"/>
    <property type="evidence" value="ECO:0000318"/>
    <property type="project" value="GO_Central"/>
</dbReference>
<dbReference type="CDD" id="cd04301">
    <property type="entry name" value="NAT_SF"/>
    <property type="match status" value="2"/>
</dbReference>
<dbReference type="Gene3D" id="3.40.630.30">
    <property type="match status" value="1"/>
</dbReference>
<dbReference type="HAMAP" id="MF_01698">
    <property type="entry name" value="MshD"/>
    <property type="match status" value="1"/>
</dbReference>
<dbReference type="InterPro" id="IPR016181">
    <property type="entry name" value="Acyl_CoA_acyltransferase"/>
</dbReference>
<dbReference type="InterPro" id="IPR050832">
    <property type="entry name" value="Bact_Acetyltransf"/>
</dbReference>
<dbReference type="InterPro" id="IPR000182">
    <property type="entry name" value="GNAT_dom"/>
</dbReference>
<dbReference type="InterPro" id="IPR017813">
    <property type="entry name" value="Mycothiol_AcTrfase"/>
</dbReference>
<dbReference type="NCBIfam" id="TIGR03448">
    <property type="entry name" value="mycothiol_MshD"/>
    <property type="match status" value="1"/>
</dbReference>
<dbReference type="PANTHER" id="PTHR43877">
    <property type="entry name" value="AMINOALKYLPHOSPHONATE N-ACETYLTRANSFERASE-RELATED-RELATED"/>
    <property type="match status" value="1"/>
</dbReference>
<dbReference type="Pfam" id="PF00583">
    <property type="entry name" value="Acetyltransf_1"/>
    <property type="match status" value="1"/>
</dbReference>
<dbReference type="Pfam" id="PF13508">
    <property type="entry name" value="Acetyltransf_7"/>
    <property type="match status" value="1"/>
</dbReference>
<dbReference type="PIRSF" id="PIRSF021524">
    <property type="entry name" value="MSH_acetyltransferase"/>
    <property type="match status" value="1"/>
</dbReference>
<dbReference type="SUPFAM" id="SSF55729">
    <property type="entry name" value="Acyl-CoA N-acyltransferases (Nat)"/>
    <property type="match status" value="1"/>
</dbReference>
<dbReference type="PROSITE" id="PS51186">
    <property type="entry name" value="GNAT"/>
    <property type="match status" value="2"/>
</dbReference>
<gene>
    <name evidence="1" type="primary">mshD</name>
    <name type="ordered locus">SCO4151</name>
    <name type="ORF">SCD84.18c</name>
</gene>
<protein>
    <recommendedName>
        <fullName evidence="1">Mycothiol acetyltransferase</fullName>
        <shortName evidence="1">MSH acetyltransferase</shortName>
        <ecNumber evidence="1">2.3.1.189</ecNumber>
    </recommendedName>
    <alternativeName>
        <fullName evidence="1">Mycothiol synthase</fullName>
    </alternativeName>
</protein>
<sequence>MTSDDTVRPGRPRSIETLAELTPEQTDAVLALLTEAARTDGQHAVSEQGRLQLRGPAREGVVHLLLTLDGGELVGYAQLEGTDPVEPPAAELVVHPSHRGQGHGRALGSALLAASGKRLRIWAHGGHSAARHLAQVLGLSLFRELRQLRRPLTGLDLPEPRLPEGVSVRTFVPGQDDAAWLAVNAAAFAHHPEQGSLTQRDLDDRKAEPWFDPAGFFLAERDGELIGFHWTKVHAEERLGEVYVLGIRPDTQGGGLGKALTTIGLRHLEGQGLPTAMLYVDADNKAAVAVYERLGFVTHETDLMYRTET</sequence>
<comment type="function">
    <text evidence="1">Catalyzes the transfer of acetyl from acetyl-CoA to desacetylmycothiol (Cys-GlcN-Ins) to form mycothiol.</text>
</comment>
<comment type="catalytic activity">
    <reaction evidence="1">
        <text>1D-myo-inositol 2-(L-cysteinylamino)-2-deoxy-alpha-D-glucopyranoside + acetyl-CoA = mycothiol + CoA + H(+)</text>
        <dbReference type="Rhea" id="RHEA:26172"/>
        <dbReference type="ChEBI" id="CHEBI:15378"/>
        <dbReference type="ChEBI" id="CHEBI:16768"/>
        <dbReference type="ChEBI" id="CHEBI:57287"/>
        <dbReference type="ChEBI" id="CHEBI:57288"/>
        <dbReference type="ChEBI" id="CHEBI:58887"/>
        <dbReference type="EC" id="2.3.1.189"/>
    </reaction>
</comment>
<comment type="subunit">
    <text evidence="1">Monomer.</text>
</comment>
<comment type="induction">
    <text evidence="2">Gradually induced by thiol-oxidant diamide, under (probably indirect) control of SigR.</text>
</comment>
<comment type="similarity">
    <text evidence="1">Belongs to the acetyltransferase family. MshD subfamily.</text>
</comment>
<keyword id="KW-0012">Acyltransferase</keyword>
<keyword id="KW-1185">Reference proteome</keyword>
<keyword id="KW-0677">Repeat</keyword>
<keyword id="KW-0808">Transferase</keyword>
<evidence type="ECO:0000255" key="1">
    <source>
        <dbReference type="HAMAP-Rule" id="MF_01698"/>
    </source>
</evidence>
<evidence type="ECO:0000269" key="2">
    <source>
    </source>
</evidence>